<geneLocation type="chloroplast"/>
<dbReference type="EMBL" id="AJ506156">
    <property type="protein sequence ID" value="CAD45164.1"/>
    <property type="status" value="ALT_INIT"/>
    <property type="molecule type" value="Genomic_DNA"/>
</dbReference>
<dbReference type="RefSeq" id="NP_904157.1">
    <property type="nucleotide sequence ID" value="NC_005086.1"/>
</dbReference>
<dbReference type="STRING" id="13333.Q70XV6"/>
<dbReference type="GeneID" id="2546536"/>
<dbReference type="KEGG" id="atr:2546536"/>
<dbReference type="OrthoDB" id="1938219at2759"/>
<dbReference type="Proteomes" id="UP000017836">
    <property type="component" value="Chloroplast"/>
</dbReference>
<dbReference type="GO" id="GO:0009706">
    <property type="term" value="C:chloroplast inner membrane"/>
    <property type="evidence" value="ECO:0007669"/>
    <property type="project" value="UniProtKB-SubCell"/>
</dbReference>
<dbReference type="GO" id="GO:0015031">
    <property type="term" value="P:protein transport"/>
    <property type="evidence" value="ECO:0007669"/>
    <property type="project" value="UniProtKB-KW"/>
</dbReference>
<dbReference type="InterPro" id="IPR008896">
    <property type="entry name" value="TIC214"/>
</dbReference>
<dbReference type="PANTHER" id="PTHR33163:SF40">
    <property type="entry name" value="PROTEIN TIC 214"/>
    <property type="match status" value="1"/>
</dbReference>
<dbReference type="PANTHER" id="PTHR33163">
    <property type="entry name" value="PROTEIN TIC 214-RELATED"/>
    <property type="match status" value="1"/>
</dbReference>
<dbReference type="Pfam" id="PF05758">
    <property type="entry name" value="Ycf1"/>
    <property type="match status" value="2"/>
</dbReference>
<sequence length="1794" mass="215290">MILKSFLLGNLLSLCMKIRNSVVVVGLYYGFITTFSIGPSYLFLLRARVMEEGTEKEVSATTGFIMGQFMMLISIYYTPLHLALGRPHTITVLVLPYLLFHFFWNNHKHFFSYRSTTRNSMRNLSIQCVFLNNLIFQLFNHFILPSSTLARLVNIYMFRCNNKMLFVTSSFVGWLIGHILFMKWVGLVLFWIRQNHSIRSNKYIKYLVSELRKSMARILSILLFITCVYYLGRIPSPIFTKKLKETSETGETEEETDVEIERTSETKGTEQEKEGSTEEDPSLFCSEEKGDPDKIDEREGVNGKEKTKDHFNLKERWYNNKTVYRDQEDNTAYGDGNQEDWELKALKLKEEKKLFWFEKPFITFLFDYQRWNRPFRYIENDQFANTVRNEMSQYFFNTCPSDGKRVISFTYPPSLSVFGEMIQKKMSLCGMKELYPKDKNLYNHWVSTNEQKRDKVSKEFINRIEALYGGDIVLQKRVRLCNDRDEKECLPKMSDPFLNGSYRGTIKELYSNSIINDPITSTYNSGEKFWINRIHSLLFCDLNDQAIRNKSSEIQEIKKKIPQRLYRLTTDLEQDEGEDERESVEFPEIRSRKTKHMVIYADNEENTNIFTHTGAGTTYDPENDQMEEVDVIRYTQKPDFRRDLIKGSMRAQRRKTVTWEMLQINLHSPLFLDRIDKNPFFYFDISRIINLIFRDWTKKKPEFQTSNFKEETKKEDEIEETWETIAFGQVIRGFLLVTQSILRKYIVLPSLIIAKNLVRMLLFQLPEWYEDFKEWSREMHIKCTYHGVQLSERKFPKNWLKAGIQIKILFPFYLKPWRKSKLRSHHIDHPMKKRKKQNSCFLTVWGMETDLPFGPARKGPSFFEPIHKELEKKFKKGKKKWFLFVRIFKEKKIWVIKRVLFIKGVMKELTKANPVFLFGLKRVYDGSENRKDSISNNKTISESPIRKSPIRTGSMDWTNSSLTERKRKDLSDKTTTIRDQIERIRITRDKKTNFLTIDMNISPNETSYSDKRSESQKPIWQVSKRRSTRLLYKWRYFMKSFIERIHRNVFLCMINLPRINTQLFLESTKKIIDKYISNDEKNQSGIDEKNKKKIHFIFISTRKLLSTISNKKTNNSKIHCSLSQAYVFYKLSQKPGIKKYRLGSLFQYRRAYSIKDRIKDYLEIERIFHSESKHKKPGNFGMNEWKNWLIGNYQYNFSYTRWSRLDPQKWRNKVNEQCMIKNKDSKKTDSYSYEKDPLINHERHILYSADLLQNHKKKLSKRYRYDLLSYRYINFGNNSSIYRSLLQVNEEQRILILSSHSHIIHKYEQLNLPAISDYLEERFIVDMEKKTDRKYFDLRIIKFWSRRNTNTDMDLRINTNKKNNTGTNYYQMIDKKDLIYLTSYQEIYPRNKENNFFDWMGMNEELLYRRISNLALWFFPELVLLNDAYKTKPWTIPIRLLLFNGKKKITETQKMNENKKRDLGILSNQKKYLELGTRDREEKKWWDQEDLRPDTKYQEYFGSDVKNQKDVELDVWYREGKSREQEDYTDINKSRKKKQSKSNKEAELDLLLKRYLLFQFRWDDSLKKKMINNIKLYSLLLRLMDPKKIVISSIQRGEMWLDIMLIHKDLPLTKLKKGGVFTMEPLRLSRKWNGQFLMYQTLSISLVHKIKQQTDRRYRETKYIDENFFDLFIPRNGRVFVNGDNKNYDLFVPENISALRRRRELRILSRLNPGKGNINIIFSNRKKIQNCKPFLDRGKHLETDTNKAIKFKLFLWPNHRLEDLACMNRYWFDTNNGTRFSMSRIRMYPRFGIS</sequence>
<name>TI214_AMBTC</name>
<protein>
    <recommendedName>
        <fullName evidence="1">Protein TIC 214</fullName>
    </recommendedName>
    <alternativeName>
        <fullName evidence="1">Translocon at the inner envelope membrane of chloroplasts 214</fullName>
        <shortName evidence="1">AtTIC214</shortName>
    </alternativeName>
</protein>
<organism>
    <name type="scientific">Amborella trichopoda</name>
    <dbReference type="NCBI Taxonomy" id="13333"/>
    <lineage>
        <taxon>Eukaryota</taxon>
        <taxon>Viridiplantae</taxon>
        <taxon>Streptophyta</taxon>
        <taxon>Embryophyta</taxon>
        <taxon>Tracheophyta</taxon>
        <taxon>Spermatophyta</taxon>
        <taxon>Magnoliopsida</taxon>
        <taxon>Amborellales</taxon>
        <taxon>Amborellaceae</taxon>
        <taxon>Amborella</taxon>
    </lineage>
</organism>
<reference key="1">
    <citation type="journal article" date="2003" name="Mol. Biol. Evol.">
        <title>Analysis of the Amborella trichopoda chloroplast genome sequence suggests that Amborella is not a basal angiosperm.</title>
        <authorList>
            <person name="Goremykin V.V."/>
            <person name="Hirsch-Ernst K.I."/>
            <person name="Wolfl S."/>
            <person name="Hellwig F.H."/>
        </authorList>
    </citation>
    <scope>NUCLEOTIDE SEQUENCE [LARGE SCALE GENOMIC DNA]</scope>
</reference>
<comment type="function">
    <text evidence="1">Involved in protein precursor import into chloroplasts. May be part of an intermediate translocation complex acting as a protein-conducting channel at the inner envelope.</text>
</comment>
<comment type="subunit">
    <text evidence="1">Part of the Tic complex.</text>
</comment>
<comment type="subcellular location">
    <subcellularLocation>
        <location evidence="1">Plastid</location>
        <location evidence="1">Chloroplast inner membrane</location>
        <topology evidence="2">Multi-pass membrane protein</topology>
    </subcellularLocation>
</comment>
<comment type="similarity">
    <text evidence="4">Belongs to the TIC214 family.</text>
</comment>
<comment type="sequence caution" evidence="4">
    <conflict type="erroneous initiation">
        <sequence resource="EMBL-CDS" id="CAD45164"/>
    </conflict>
</comment>
<evidence type="ECO:0000250" key="1">
    <source>
        <dbReference type="UniProtKB" id="P56785"/>
    </source>
</evidence>
<evidence type="ECO:0000255" key="2"/>
<evidence type="ECO:0000256" key="3">
    <source>
        <dbReference type="SAM" id="MobiDB-lite"/>
    </source>
</evidence>
<evidence type="ECO:0000305" key="4"/>
<feature type="chain" id="PRO_0000262600" description="Protein TIC 214">
    <location>
        <begin position="1"/>
        <end position="1794"/>
    </location>
</feature>
<feature type="transmembrane region" description="Helical" evidence="2">
    <location>
        <begin position="23"/>
        <end position="43"/>
    </location>
</feature>
<feature type="transmembrane region" description="Helical" evidence="2">
    <location>
        <begin position="64"/>
        <end position="84"/>
    </location>
</feature>
<feature type="transmembrane region" description="Helical" evidence="2">
    <location>
        <begin position="87"/>
        <end position="107"/>
    </location>
</feature>
<feature type="transmembrane region" description="Helical" evidence="2">
    <location>
        <begin position="124"/>
        <end position="144"/>
    </location>
</feature>
<feature type="transmembrane region" description="Helical" evidence="2">
    <location>
        <begin position="172"/>
        <end position="192"/>
    </location>
</feature>
<feature type="transmembrane region" description="Helical" evidence="2">
    <location>
        <begin position="218"/>
        <end position="238"/>
    </location>
</feature>
<feature type="region of interest" description="Disordered" evidence="3">
    <location>
        <begin position="244"/>
        <end position="307"/>
    </location>
</feature>
<feature type="compositionally biased region" description="Acidic residues" evidence="3">
    <location>
        <begin position="248"/>
        <end position="258"/>
    </location>
</feature>
<feature type="compositionally biased region" description="Basic and acidic residues" evidence="3">
    <location>
        <begin position="259"/>
        <end position="276"/>
    </location>
</feature>
<feature type="compositionally biased region" description="Basic and acidic residues" evidence="3">
    <location>
        <begin position="286"/>
        <end position="307"/>
    </location>
</feature>
<gene>
    <name evidence="1" type="primary">TIC214</name>
    <name type="synonym">ycf1</name>
</gene>
<proteinExistence type="inferred from homology"/>
<keyword id="KW-0150">Chloroplast</keyword>
<keyword id="KW-0472">Membrane</keyword>
<keyword id="KW-0934">Plastid</keyword>
<keyword id="KW-1001">Plastid inner membrane</keyword>
<keyword id="KW-0653">Protein transport</keyword>
<keyword id="KW-1185">Reference proteome</keyword>
<keyword id="KW-0812">Transmembrane</keyword>
<keyword id="KW-1133">Transmembrane helix</keyword>
<keyword id="KW-0813">Transport</keyword>
<accession>Q70XV6</accession>